<evidence type="ECO:0000250" key="1"/>
<evidence type="ECO:0000305" key="2"/>
<organism>
    <name type="scientific">Kluyveromyces lactis (strain ATCC 8585 / CBS 2359 / DSM 70799 / NBRC 1267 / NRRL Y-1140 / WM37)</name>
    <name type="common">Yeast</name>
    <name type="synonym">Candida sphaerica</name>
    <dbReference type="NCBI Taxonomy" id="284590"/>
    <lineage>
        <taxon>Eukaryota</taxon>
        <taxon>Fungi</taxon>
        <taxon>Dikarya</taxon>
        <taxon>Ascomycota</taxon>
        <taxon>Saccharomycotina</taxon>
        <taxon>Saccharomycetes</taxon>
        <taxon>Saccharomycetales</taxon>
        <taxon>Saccharomycetaceae</taxon>
        <taxon>Kluyveromyces</taxon>
    </lineage>
</organism>
<proteinExistence type="inferred from homology"/>
<keyword id="KW-0159">Chromosome partition</keyword>
<keyword id="KW-0235">DNA replication</keyword>
<keyword id="KW-0539">Nucleus</keyword>
<keyword id="KW-1185">Reference proteome</keyword>
<dbReference type="EMBL" id="CR382124">
    <property type="protein sequence ID" value="CAH00447.1"/>
    <property type="molecule type" value="Genomic_DNA"/>
</dbReference>
<dbReference type="RefSeq" id="XP_453351.1">
    <property type="nucleotide sequence ID" value="XM_453351.1"/>
</dbReference>
<dbReference type="SMR" id="Q6CRT8"/>
<dbReference type="FunCoup" id="Q6CRT8">
    <property type="interactions" value="726"/>
</dbReference>
<dbReference type="STRING" id="284590.Q6CRT8"/>
<dbReference type="PaxDb" id="284590-Q6CRT8"/>
<dbReference type="KEGG" id="kla:KLLA0_D06501g"/>
<dbReference type="eggNOG" id="KOG4071">
    <property type="taxonomic scope" value="Eukaryota"/>
</dbReference>
<dbReference type="HOGENOM" id="CLU_078274_1_1_1"/>
<dbReference type="InParanoid" id="Q6CRT8"/>
<dbReference type="OMA" id="DSLNCMY"/>
<dbReference type="Proteomes" id="UP000000598">
    <property type="component" value="Chromosome D"/>
</dbReference>
<dbReference type="GO" id="GO:0000811">
    <property type="term" value="C:GINS complex"/>
    <property type="evidence" value="ECO:0007669"/>
    <property type="project" value="TreeGrafter"/>
</dbReference>
<dbReference type="GO" id="GO:0007059">
    <property type="term" value="P:chromosome segregation"/>
    <property type="evidence" value="ECO:0007669"/>
    <property type="project" value="UniProtKB-KW"/>
</dbReference>
<dbReference type="GO" id="GO:0006260">
    <property type="term" value="P:DNA replication"/>
    <property type="evidence" value="ECO:0007669"/>
    <property type="project" value="UniProtKB-KW"/>
</dbReference>
<dbReference type="GO" id="GO:0000727">
    <property type="term" value="P:double-strand break repair via break-induced replication"/>
    <property type="evidence" value="ECO:0007669"/>
    <property type="project" value="TreeGrafter"/>
</dbReference>
<dbReference type="CDD" id="cd11712">
    <property type="entry name" value="GINS_A_psf2"/>
    <property type="match status" value="1"/>
</dbReference>
<dbReference type="CDD" id="cd21694">
    <property type="entry name" value="GINS_B_Psf2"/>
    <property type="match status" value="1"/>
</dbReference>
<dbReference type="FunFam" id="1.20.58.1020:FF:000001">
    <property type="entry name" value="DNA replication complex GINS protein PSF2"/>
    <property type="match status" value="1"/>
</dbReference>
<dbReference type="Gene3D" id="1.20.58.1020">
    <property type="match status" value="1"/>
</dbReference>
<dbReference type="Gene3D" id="3.40.5.50">
    <property type="match status" value="1"/>
</dbReference>
<dbReference type="InterPro" id="IPR021151">
    <property type="entry name" value="GINS_A"/>
</dbReference>
<dbReference type="InterPro" id="IPR036224">
    <property type="entry name" value="GINS_bundle-like_dom_sf"/>
</dbReference>
<dbReference type="InterPro" id="IPR007257">
    <property type="entry name" value="GINS_Psf2"/>
</dbReference>
<dbReference type="InterPro" id="IPR056784">
    <property type="entry name" value="PSF2_N"/>
</dbReference>
<dbReference type="PANTHER" id="PTHR12772">
    <property type="entry name" value="DNA REPLICATION COMPLEX GINS PROTEIN PSF2"/>
    <property type="match status" value="1"/>
</dbReference>
<dbReference type="PANTHER" id="PTHR12772:SF0">
    <property type="entry name" value="DNA REPLICATION COMPLEX GINS PROTEIN PSF2"/>
    <property type="match status" value="1"/>
</dbReference>
<dbReference type="Pfam" id="PF25005">
    <property type="entry name" value="PSF2_N"/>
    <property type="match status" value="1"/>
</dbReference>
<dbReference type="Pfam" id="PF05916">
    <property type="entry name" value="Sld5"/>
    <property type="match status" value="1"/>
</dbReference>
<dbReference type="PIRSF" id="PIRSF028998">
    <property type="entry name" value="GINS_Psf2_subgr"/>
    <property type="match status" value="1"/>
</dbReference>
<dbReference type="SUPFAM" id="SSF158573">
    <property type="entry name" value="GINS helical bundle-like"/>
    <property type="match status" value="1"/>
</dbReference>
<dbReference type="SUPFAM" id="SSF160059">
    <property type="entry name" value="PriA/YqbF domain"/>
    <property type="match status" value="1"/>
</dbReference>
<feature type="chain" id="PRO_0000255426" description="DNA replication complex GINS protein PSF2">
    <location>
        <begin position="1"/>
        <end position="201"/>
    </location>
</feature>
<sequence>MALPRDLSIGFSPQEIQFLIENEPTRIMPRITTRKTKKQLAKDPGAQWSLITCDDSTVNNMVAMNSCEVTLWLALLLKQQGKCNVVVPSWLTLQQLEKYLDFELKNPSRFSNLPWNWLVVSSLLFARCSDDFQDPVHLLRSKVQDLREVRLGKVNKGLQYLNESHLQLENLSLMEINEMRPYACGIMDKLRTIHDSSNDTT</sequence>
<name>PSF2_KLULA</name>
<reference key="1">
    <citation type="journal article" date="2004" name="Nature">
        <title>Genome evolution in yeasts.</title>
        <authorList>
            <person name="Dujon B."/>
            <person name="Sherman D."/>
            <person name="Fischer G."/>
            <person name="Durrens P."/>
            <person name="Casaregola S."/>
            <person name="Lafontaine I."/>
            <person name="de Montigny J."/>
            <person name="Marck C."/>
            <person name="Neuveglise C."/>
            <person name="Talla E."/>
            <person name="Goffard N."/>
            <person name="Frangeul L."/>
            <person name="Aigle M."/>
            <person name="Anthouard V."/>
            <person name="Babour A."/>
            <person name="Barbe V."/>
            <person name="Barnay S."/>
            <person name="Blanchin S."/>
            <person name="Beckerich J.-M."/>
            <person name="Beyne E."/>
            <person name="Bleykasten C."/>
            <person name="Boisrame A."/>
            <person name="Boyer J."/>
            <person name="Cattolico L."/>
            <person name="Confanioleri F."/>
            <person name="de Daruvar A."/>
            <person name="Despons L."/>
            <person name="Fabre E."/>
            <person name="Fairhead C."/>
            <person name="Ferry-Dumazet H."/>
            <person name="Groppi A."/>
            <person name="Hantraye F."/>
            <person name="Hennequin C."/>
            <person name="Jauniaux N."/>
            <person name="Joyet P."/>
            <person name="Kachouri R."/>
            <person name="Kerrest A."/>
            <person name="Koszul R."/>
            <person name="Lemaire M."/>
            <person name="Lesur I."/>
            <person name="Ma L."/>
            <person name="Muller H."/>
            <person name="Nicaud J.-M."/>
            <person name="Nikolski M."/>
            <person name="Oztas S."/>
            <person name="Ozier-Kalogeropoulos O."/>
            <person name="Pellenz S."/>
            <person name="Potier S."/>
            <person name="Richard G.-F."/>
            <person name="Straub M.-L."/>
            <person name="Suleau A."/>
            <person name="Swennen D."/>
            <person name="Tekaia F."/>
            <person name="Wesolowski-Louvel M."/>
            <person name="Westhof E."/>
            <person name="Wirth B."/>
            <person name="Zeniou-Meyer M."/>
            <person name="Zivanovic Y."/>
            <person name="Bolotin-Fukuhara M."/>
            <person name="Thierry A."/>
            <person name="Bouchier C."/>
            <person name="Caudron B."/>
            <person name="Scarpelli C."/>
            <person name="Gaillardin C."/>
            <person name="Weissenbach J."/>
            <person name="Wincker P."/>
            <person name="Souciet J.-L."/>
        </authorList>
    </citation>
    <scope>NUCLEOTIDE SEQUENCE [LARGE SCALE GENOMIC DNA]</scope>
    <source>
        <strain>ATCC 8585 / CBS 2359 / DSM 70799 / NBRC 1267 / NRRL Y-1140 / WM37</strain>
    </source>
</reference>
<protein>
    <recommendedName>
        <fullName>DNA replication complex GINS protein PSF2</fullName>
    </recommendedName>
</protein>
<gene>
    <name type="primary">PSF2</name>
    <name type="ordered locus">KLLA0D06501g</name>
</gene>
<accession>Q6CRT8</accession>
<comment type="function">
    <text evidence="1">The GINS complex plays an essential role in the initiation of DNA replication. Has a role in chromosome segregation (By similarity).</text>
</comment>
<comment type="subunit">
    <text evidence="1">Component of the GINS complex which is a heterotetramer of SLD5, PSF1, PSF2 and PSF3.</text>
</comment>
<comment type="subcellular location">
    <subcellularLocation>
        <location evidence="1">Nucleus</location>
    </subcellularLocation>
</comment>
<comment type="similarity">
    <text evidence="2">Belongs to the GINS2/PSF2 family.</text>
</comment>